<gene>
    <name evidence="1" type="primary">ndhJ</name>
</gene>
<sequence length="159" mass="18783">MQQGWLSNWLVKHEVVHRSLGFDHRGIETLQIKAEDWDSIAVILYVYGYNYLRSQCAYDVAPGGSLASVYHLTRIQYGIDNPEEVCIKVFAQKDNPRIPSVFWIWRSSDFQERESFDMVGISYDNHPRLKRILMPESWIGWPLRKDYITPNFYEIQDAH</sequence>
<organism>
    <name type="scientific">Oryza nivara</name>
    <name type="common">Indian wild rice</name>
    <name type="synonym">Oryza sativa f. spontanea</name>
    <dbReference type="NCBI Taxonomy" id="4536"/>
    <lineage>
        <taxon>Eukaryota</taxon>
        <taxon>Viridiplantae</taxon>
        <taxon>Streptophyta</taxon>
        <taxon>Embryophyta</taxon>
        <taxon>Tracheophyta</taxon>
        <taxon>Spermatophyta</taxon>
        <taxon>Magnoliopsida</taxon>
        <taxon>Liliopsida</taxon>
        <taxon>Poales</taxon>
        <taxon>Poaceae</taxon>
        <taxon>BOP clade</taxon>
        <taxon>Oryzoideae</taxon>
        <taxon>Oryzeae</taxon>
        <taxon>Oryzinae</taxon>
        <taxon>Oryza</taxon>
    </lineage>
</organism>
<comment type="function">
    <text evidence="1">NDH shuttles electrons from NAD(P)H:plastoquinone, via FMN and iron-sulfur (Fe-S) centers, to quinones in the photosynthetic chain and possibly in a chloroplast respiratory chain. The immediate electron acceptor for the enzyme in this species is believed to be plastoquinone. Couples the redox reaction to proton translocation, and thus conserves the redox energy in a proton gradient.</text>
</comment>
<comment type="catalytic activity">
    <reaction evidence="1">
        <text>a plastoquinone + NADH + (n+1) H(+)(in) = a plastoquinol + NAD(+) + n H(+)(out)</text>
        <dbReference type="Rhea" id="RHEA:42608"/>
        <dbReference type="Rhea" id="RHEA-COMP:9561"/>
        <dbReference type="Rhea" id="RHEA-COMP:9562"/>
        <dbReference type="ChEBI" id="CHEBI:15378"/>
        <dbReference type="ChEBI" id="CHEBI:17757"/>
        <dbReference type="ChEBI" id="CHEBI:57540"/>
        <dbReference type="ChEBI" id="CHEBI:57945"/>
        <dbReference type="ChEBI" id="CHEBI:62192"/>
    </reaction>
</comment>
<comment type="catalytic activity">
    <reaction evidence="1">
        <text>a plastoquinone + NADPH + (n+1) H(+)(in) = a plastoquinol + NADP(+) + n H(+)(out)</text>
        <dbReference type="Rhea" id="RHEA:42612"/>
        <dbReference type="Rhea" id="RHEA-COMP:9561"/>
        <dbReference type="Rhea" id="RHEA-COMP:9562"/>
        <dbReference type="ChEBI" id="CHEBI:15378"/>
        <dbReference type="ChEBI" id="CHEBI:17757"/>
        <dbReference type="ChEBI" id="CHEBI:57783"/>
        <dbReference type="ChEBI" id="CHEBI:58349"/>
        <dbReference type="ChEBI" id="CHEBI:62192"/>
    </reaction>
</comment>
<comment type="subunit">
    <text evidence="1">NDH is composed of at least 16 different subunits, 5 of which are encoded in the nucleus.</text>
</comment>
<comment type="subcellular location">
    <subcellularLocation>
        <location evidence="1">Plastid</location>
        <location evidence="1">Chloroplast thylakoid membrane</location>
        <topology evidence="1">Peripheral membrane protein</topology>
        <orientation evidence="1">Stromal side</orientation>
    </subcellularLocation>
</comment>
<comment type="similarity">
    <text evidence="1">Belongs to the complex I 30 kDa subunit family.</text>
</comment>
<feature type="chain" id="PRO_0000118659" description="NAD(P)H-quinone oxidoreductase subunit J, chloroplastic">
    <location>
        <begin position="1"/>
        <end position="159"/>
    </location>
</feature>
<name>NDHJ_ORYNI</name>
<geneLocation type="chloroplast"/>
<evidence type="ECO:0000255" key="1">
    <source>
        <dbReference type="HAMAP-Rule" id="MF_01357"/>
    </source>
</evidence>
<evidence type="ECO:0000312" key="2">
    <source>
        <dbReference type="Proteomes" id="UP000006591"/>
    </source>
</evidence>
<reference key="1">
    <citation type="journal article" date="2004" name="Gene">
        <title>The complete nucleotide sequence of wild rice (Oryza nivara) chloroplast genome: first genome wide comparative sequence analysis of wild and cultivated rice.</title>
        <authorList>
            <person name="Masood M.S."/>
            <person name="Nishikawa T."/>
            <person name="Fukuoka S."/>
            <person name="Njenga P.K."/>
            <person name="Tsudzuki T."/>
            <person name="Kadowaki K."/>
        </authorList>
    </citation>
    <scope>NUCLEOTIDE SEQUENCE [LARGE SCALE GENOMIC DNA]</scope>
    <source>
        <strain evidence="2">cv. SL10</strain>
    </source>
</reference>
<accession>Q6ENH1</accession>
<keyword id="KW-0150">Chloroplast</keyword>
<keyword id="KW-0472">Membrane</keyword>
<keyword id="KW-0520">NAD</keyword>
<keyword id="KW-0521">NADP</keyword>
<keyword id="KW-0934">Plastid</keyword>
<keyword id="KW-0618">Plastoquinone</keyword>
<keyword id="KW-0874">Quinone</keyword>
<keyword id="KW-1185">Reference proteome</keyword>
<keyword id="KW-0793">Thylakoid</keyword>
<keyword id="KW-1278">Translocase</keyword>
<keyword id="KW-0813">Transport</keyword>
<dbReference type="EC" id="7.1.1.-" evidence="1"/>
<dbReference type="EMBL" id="AP006728">
    <property type="protein sequence ID" value="BAD26781.1"/>
    <property type="molecule type" value="Genomic_DNA"/>
</dbReference>
<dbReference type="RefSeq" id="YP_052752.1">
    <property type="nucleotide sequence ID" value="NC_005973.1"/>
</dbReference>
<dbReference type="SMR" id="Q6ENH1"/>
<dbReference type="STRING" id="4536.Q6ENH1"/>
<dbReference type="GeneID" id="2885915"/>
<dbReference type="Proteomes" id="UP000006591">
    <property type="component" value="Chloroplast"/>
</dbReference>
<dbReference type="GO" id="GO:0009535">
    <property type="term" value="C:chloroplast thylakoid membrane"/>
    <property type="evidence" value="ECO:0007669"/>
    <property type="project" value="UniProtKB-SubCell"/>
</dbReference>
<dbReference type="GO" id="GO:0009536">
    <property type="term" value="C:plastid"/>
    <property type="evidence" value="ECO:0000305"/>
    <property type="project" value="Gramene"/>
</dbReference>
<dbReference type="GO" id="GO:0008137">
    <property type="term" value="F:NADH dehydrogenase (ubiquinone) activity"/>
    <property type="evidence" value="ECO:0007669"/>
    <property type="project" value="InterPro"/>
</dbReference>
<dbReference type="GO" id="GO:0048038">
    <property type="term" value="F:quinone binding"/>
    <property type="evidence" value="ECO:0007669"/>
    <property type="project" value="UniProtKB-KW"/>
</dbReference>
<dbReference type="GO" id="GO:0019684">
    <property type="term" value="P:photosynthesis, light reaction"/>
    <property type="evidence" value="ECO:0007669"/>
    <property type="project" value="UniProtKB-UniRule"/>
</dbReference>
<dbReference type="Gene3D" id="3.30.460.80">
    <property type="entry name" value="NADH:ubiquinone oxidoreductase, 30kDa subunit"/>
    <property type="match status" value="1"/>
</dbReference>
<dbReference type="HAMAP" id="MF_01357">
    <property type="entry name" value="NDH1_NuoC"/>
    <property type="match status" value="1"/>
</dbReference>
<dbReference type="InterPro" id="IPR010218">
    <property type="entry name" value="NADH_DH_suC"/>
</dbReference>
<dbReference type="InterPro" id="IPR037232">
    <property type="entry name" value="NADH_quin_OxRdtase_su_C/D-like"/>
</dbReference>
<dbReference type="InterPro" id="IPR001268">
    <property type="entry name" value="NADH_UbQ_OxRdtase_30kDa_su"/>
</dbReference>
<dbReference type="InterPro" id="IPR020396">
    <property type="entry name" value="NADH_UbQ_OxRdtase_CS"/>
</dbReference>
<dbReference type="NCBIfam" id="NF009141">
    <property type="entry name" value="PRK12494.1"/>
    <property type="match status" value="1"/>
</dbReference>
<dbReference type="PANTHER" id="PTHR10884:SF14">
    <property type="entry name" value="NADH DEHYDROGENASE [UBIQUINONE] IRON-SULFUR PROTEIN 3, MITOCHONDRIAL"/>
    <property type="match status" value="1"/>
</dbReference>
<dbReference type="PANTHER" id="PTHR10884">
    <property type="entry name" value="NADH DEHYDROGENASE UBIQUINONE IRON-SULFUR PROTEIN 3"/>
    <property type="match status" value="1"/>
</dbReference>
<dbReference type="Pfam" id="PF00329">
    <property type="entry name" value="Complex1_30kDa"/>
    <property type="match status" value="1"/>
</dbReference>
<dbReference type="SUPFAM" id="SSF143243">
    <property type="entry name" value="Nqo5-like"/>
    <property type="match status" value="1"/>
</dbReference>
<dbReference type="PROSITE" id="PS00542">
    <property type="entry name" value="COMPLEX1_30K"/>
    <property type="match status" value="1"/>
</dbReference>
<protein>
    <recommendedName>
        <fullName evidence="1">NAD(P)H-quinone oxidoreductase subunit J, chloroplastic</fullName>
        <ecNumber evidence="1">7.1.1.-</ecNumber>
    </recommendedName>
    <alternativeName>
        <fullName>NAD(P)H dehydrogenase subunit J</fullName>
    </alternativeName>
    <alternativeName>
        <fullName evidence="1">NADH-plastoquinone oxidoreductase subunit J</fullName>
    </alternativeName>
</protein>
<proteinExistence type="inferred from homology"/>